<gene>
    <name evidence="1" type="primary">acpS</name>
    <name type="ordered locus">Ppha_2565</name>
</gene>
<reference key="1">
    <citation type="submission" date="2008-06" db="EMBL/GenBank/DDBJ databases">
        <title>Complete sequence of Pelodictyon phaeoclathratiforme BU-1.</title>
        <authorList>
            <consortium name="US DOE Joint Genome Institute"/>
            <person name="Lucas S."/>
            <person name="Copeland A."/>
            <person name="Lapidus A."/>
            <person name="Glavina del Rio T."/>
            <person name="Dalin E."/>
            <person name="Tice H."/>
            <person name="Bruce D."/>
            <person name="Goodwin L."/>
            <person name="Pitluck S."/>
            <person name="Schmutz J."/>
            <person name="Larimer F."/>
            <person name="Land M."/>
            <person name="Hauser L."/>
            <person name="Kyrpides N."/>
            <person name="Mikhailova N."/>
            <person name="Liu Z."/>
            <person name="Li T."/>
            <person name="Zhao F."/>
            <person name="Overmann J."/>
            <person name="Bryant D.A."/>
            <person name="Richardson P."/>
        </authorList>
    </citation>
    <scope>NUCLEOTIDE SEQUENCE [LARGE SCALE GENOMIC DNA]</scope>
    <source>
        <strain>DSM 5477 / BU-1</strain>
    </source>
</reference>
<proteinExistence type="inferred from homology"/>
<name>ACPS_PELPB</name>
<accession>B4SFE8</accession>
<evidence type="ECO:0000255" key="1">
    <source>
        <dbReference type="HAMAP-Rule" id="MF_00101"/>
    </source>
</evidence>
<sequence length="120" mass="13116">MEIGVDIVDLDRIEKAYNRYGVKFLQRFLSEEEITLCLQKPQVIASIAGRFAAKEAVVKALGTGFSSGVHWKSFAILNDKQGRPFVQPADAGCFPACGAIKISIAHDRHAAIATALIEWV</sequence>
<organism>
    <name type="scientific">Pelodictyon phaeoclathratiforme (strain DSM 5477 / BU-1)</name>
    <dbReference type="NCBI Taxonomy" id="324925"/>
    <lineage>
        <taxon>Bacteria</taxon>
        <taxon>Pseudomonadati</taxon>
        <taxon>Chlorobiota</taxon>
        <taxon>Chlorobiia</taxon>
        <taxon>Chlorobiales</taxon>
        <taxon>Chlorobiaceae</taxon>
        <taxon>Chlorobium/Pelodictyon group</taxon>
        <taxon>Pelodictyon</taxon>
    </lineage>
</organism>
<feature type="chain" id="PRO_1000093902" description="Holo-[acyl-carrier-protein] synthase">
    <location>
        <begin position="1"/>
        <end position="120"/>
    </location>
</feature>
<feature type="binding site" evidence="1">
    <location>
        <position position="6"/>
    </location>
    <ligand>
        <name>Mg(2+)</name>
        <dbReference type="ChEBI" id="CHEBI:18420"/>
    </ligand>
</feature>
<feature type="binding site" evidence="1">
    <location>
        <position position="55"/>
    </location>
    <ligand>
        <name>Mg(2+)</name>
        <dbReference type="ChEBI" id="CHEBI:18420"/>
    </ligand>
</feature>
<protein>
    <recommendedName>
        <fullName evidence="1">Holo-[acyl-carrier-protein] synthase</fullName>
        <shortName evidence="1">Holo-ACP synthase</shortName>
        <ecNumber evidence="1">2.7.8.7</ecNumber>
    </recommendedName>
    <alternativeName>
        <fullName evidence="1">4'-phosphopantetheinyl transferase AcpS</fullName>
    </alternativeName>
</protein>
<dbReference type="EC" id="2.7.8.7" evidence="1"/>
<dbReference type="EMBL" id="CP001110">
    <property type="protein sequence ID" value="ACF44727.1"/>
    <property type="molecule type" value="Genomic_DNA"/>
</dbReference>
<dbReference type="RefSeq" id="WP_012509200.1">
    <property type="nucleotide sequence ID" value="NC_011060.1"/>
</dbReference>
<dbReference type="SMR" id="B4SFE8"/>
<dbReference type="STRING" id="324925.Ppha_2565"/>
<dbReference type="KEGG" id="pph:Ppha_2565"/>
<dbReference type="eggNOG" id="COG0736">
    <property type="taxonomic scope" value="Bacteria"/>
</dbReference>
<dbReference type="HOGENOM" id="CLU_089696_0_2_10"/>
<dbReference type="OrthoDB" id="517356at2"/>
<dbReference type="Proteomes" id="UP000002724">
    <property type="component" value="Chromosome"/>
</dbReference>
<dbReference type="GO" id="GO:0005737">
    <property type="term" value="C:cytoplasm"/>
    <property type="evidence" value="ECO:0007669"/>
    <property type="project" value="UniProtKB-SubCell"/>
</dbReference>
<dbReference type="GO" id="GO:0008897">
    <property type="term" value="F:holo-[acyl-carrier-protein] synthase activity"/>
    <property type="evidence" value="ECO:0007669"/>
    <property type="project" value="UniProtKB-UniRule"/>
</dbReference>
<dbReference type="GO" id="GO:0000287">
    <property type="term" value="F:magnesium ion binding"/>
    <property type="evidence" value="ECO:0007669"/>
    <property type="project" value="UniProtKB-UniRule"/>
</dbReference>
<dbReference type="GO" id="GO:0006633">
    <property type="term" value="P:fatty acid biosynthetic process"/>
    <property type="evidence" value="ECO:0007669"/>
    <property type="project" value="UniProtKB-UniRule"/>
</dbReference>
<dbReference type="Gene3D" id="3.90.470.20">
    <property type="entry name" value="4'-phosphopantetheinyl transferase domain"/>
    <property type="match status" value="1"/>
</dbReference>
<dbReference type="HAMAP" id="MF_00101">
    <property type="entry name" value="AcpS"/>
    <property type="match status" value="1"/>
</dbReference>
<dbReference type="InterPro" id="IPR008278">
    <property type="entry name" value="4-PPantetheinyl_Trfase_dom"/>
</dbReference>
<dbReference type="InterPro" id="IPR037143">
    <property type="entry name" value="4-PPantetheinyl_Trfase_dom_sf"/>
</dbReference>
<dbReference type="InterPro" id="IPR002582">
    <property type="entry name" value="ACPS"/>
</dbReference>
<dbReference type="InterPro" id="IPR004568">
    <property type="entry name" value="Ppantetheine-prot_Trfase_dom"/>
</dbReference>
<dbReference type="NCBIfam" id="TIGR00516">
    <property type="entry name" value="acpS"/>
    <property type="match status" value="1"/>
</dbReference>
<dbReference type="NCBIfam" id="TIGR00556">
    <property type="entry name" value="pantethn_trn"/>
    <property type="match status" value="1"/>
</dbReference>
<dbReference type="NCBIfam" id="NF011257">
    <property type="entry name" value="PRK14663.1"/>
    <property type="match status" value="1"/>
</dbReference>
<dbReference type="Pfam" id="PF01648">
    <property type="entry name" value="ACPS"/>
    <property type="match status" value="1"/>
</dbReference>
<dbReference type="SUPFAM" id="SSF56214">
    <property type="entry name" value="4'-phosphopantetheinyl transferase"/>
    <property type="match status" value="1"/>
</dbReference>
<keyword id="KW-0963">Cytoplasm</keyword>
<keyword id="KW-0275">Fatty acid biosynthesis</keyword>
<keyword id="KW-0276">Fatty acid metabolism</keyword>
<keyword id="KW-0444">Lipid biosynthesis</keyword>
<keyword id="KW-0443">Lipid metabolism</keyword>
<keyword id="KW-0460">Magnesium</keyword>
<keyword id="KW-0479">Metal-binding</keyword>
<keyword id="KW-1185">Reference proteome</keyword>
<keyword id="KW-0808">Transferase</keyword>
<comment type="function">
    <text evidence="1">Transfers the 4'-phosphopantetheine moiety from coenzyme A to a Ser of acyl-carrier-protein.</text>
</comment>
<comment type="catalytic activity">
    <reaction evidence="1">
        <text>apo-[ACP] + CoA = holo-[ACP] + adenosine 3',5'-bisphosphate + H(+)</text>
        <dbReference type="Rhea" id="RHEA:12068"/>
        <dbReference type="Rhea" id="RHEA-COMP:9685"/>
        <dbReference type="Rhea" id="RHEA-COMP:9690"/>
        <dbReference type="ChEBI" id="CHEBI:15378"/>
        <dbReference type="ChEBI" id="CHEBI:29999"/>
        <dbReference type="ChEBI" id="CHEBI:57287"/>
        <dbReference type="ChEBI" id="CHEBI:58343"/>
        <dbReference type="ChEBI" id="CHEBI:64479"/>
        <dbReference type="EC" id="2.7.8.7"/>
    </reaction>
</comment>
<comment type="cofactor">
    <cofactor evidence="1">
        <name>Mg(2+)</name>
        <dbReference type="ChEBI" id="CHEBI:18420"/>
    </cofactor>
</comment>
<comment type="subcellular location">
    <subcellularLocation>
        <location evidence="1">Cytoplasm</location>
    </subcellularLocation>
</comment>
<comment type="similarity">
    <text evidence="1">Belongs to the P-Pant transferase superfamily. AcpS family.</text>
</comment>